<feature type="chain" id="PRO_0000095975" description="Protein translocase subunit SecF">
    <location>
        <begin position="1"/>
        <end position="299"/>
    </location>
</feature>
<feature type="transmembrane region" description="Helical" evidence="1">
    <location>
        <begin position="14"/>
        <end position="34"/>
    </location>
</feature>
<feature type="transmembrane region" description="Helical" evidence="1">
    <location>
        <begin position="142"/>
        <end position="162"/>
    </location>
</feature>
<feature type="transmembrane region" description="Helical" evidence="1">
    <location>
        <begin position="166"/>
        <end position="186"/>
    </location>
</feature>
<feature type="transmembrane region" description="Helical" evidence="1">
    <location>
        <begin position="193"/>
        <end position="213"/>
    </location>
</feature>
<feature type="transmembrane region" description="Helical" evidence="1">
    <location>
        <begin position="245"/>
        <end position="265"/>
    </location>
</feature>
<feature type="transmembrane region" description="Helical" evidence="1">
    <location>
        <begin position="270"/>
        <end position="290"/>
    </location>
</feature>
<organism>
    <name type="scientific">Borreliella burgdorferi (strain ATCC 35210 / DSM 4680 / CIP 102532 / B31)</name>
    <name type="common">Borrelia burgdorferi</name>
    <dbReference type="NCBI Taxonomy" id="224326"/>
    <lineage>
        <taxon>Bacteria</taxon>
        <taxon>Pseudomonadati</taxon>
        <taxon>Spirochaetota</taxon>
        <taxon>Spirochaetia</taxon>
        <taxon>Spirochaetales</taxon>
        <taxon>Borreliaceae</taxon>
        <taxon>Borreliella</taxon>
    </lineage>
</organism>
<dbReference type="EMBL" id="AE000783">
    <property type="protein sequence ID" value="AAC66992.1"/>
    <property type="molecule type" value="Genomic_DNA"/>
</dbReference>
<dbReference type="PIR" id="D70181">
    <property type="entry name" value="D70181"/>
</dbReference>
<dbReference type="RefSeq" id="NP_212787.1">
    <property type="nucleotide sequence ID" value="NC_001318.1"/>
</dbReference>
<dbReference type="RefSeq" id="WP_002665673.1">
    <property type="nucleotide sequence ID" value="NC_001318.1"/>
</dbReference>
<dbReference type="SMR" id="O51597"/>
<dbReference type="STRING" id="224326.BB_0653"/>
<dbReference type="PaxDb" id="224326-BB_0653"/>
<dbReference type="EnsemblBacteria" id="AAC66992">
    <property type="protein sequence ID" value="AAC66992"/>
    <property type="gene ID" value="BB_0653"/>
</dbReference>
<dbReference type="KEGG" id="bbu:BB_0653"/>
<dbReference type="PATRIC" id="fig|224326.49.peg.1044"/>
<dbReference type="HOGENOM" id="CLU_050012_0_1_12"/>
<dbReference type="OrthoDB" id="9805019at2"/>
<dbReference type="Proteomes" id="UP000001807">
    <property type="component" value="Chromosome"/>
</dbReference>
<dbReference type="GO" id="GO:0005886">
    <property type="term" value="C:plasma membrane"/>
    <property type="evidence" value="ECO:0007669"/>
    <property type="project" value="UniProtKB-SubCell"/>
</dbReference>
<dbReference type="GO" id="GO:0015450">
    <property type="term" value="F:protein-transporting ATPase activity"/>
    <property type="evidence" value="ECO:0007669"/>
    <property type="project" value="InterPro"/>
</dbReference>
<dbReference type="GO" id="GO:0065002">
    <property type="term" value="P:intracellular protein transmembrane transport"/>
    <property type="evidence" value="ECO:0007669"/>
    <property type="project" value="UniProtKB-UniRule"/>
</dbReference>
<dbReference type="GO" id="GO:0006605">
    <property type="term" value="P:protein targeting"/>
    <property type="evidence" value="ECO:0007669"/>
    <property type="project" value="UniProtKB-UniRule"/>
</dbReference>
<dbReference type="GO" id="GO:0043952">
    <property type="term" value="P:protein transport by the Sec complex"/>
    <property type="evidence" value="ECO:0007669"/>
    <property type="project" value="UniProtKB-UniRule"/>
</dbReference>
<dbReference type="Gene3D" id="1.20.1640.10">
    <property type="entry name" value="Multidrug efflux transporter AcrB transmembrane domain"/>
    <property type="match status" value="1"/>
</dbReference>
<dbReference type="HAMAP" id="MF_01464_B">
    <property type="entry name" value="SecF_B"/>
    <property type="match status" value="1"/>
</dbReference>
<dbReference type="InterPro" id="IPR022813">
    <property type="entry name" value="SecD/SecF_arch_bac"/>
</dbReference>
<dbReference type="InterPro" id="IPR022645">
    <property type="entry name" value="SecD/SecF_bac"/>
</dbReference>
<dbReference type="InterPro" id="IPR048634">
    <property type="entry name" value="SecD_SecF_C"/>
</dbReference>
<dbReference type="InterPro" id="IPR055344">
    <property type="entry name" value="SecD_SecF_C_bact"/>
</dbReference>
<dbReference type="InterPro" id="IPR005665">
    <property type="entry name" value="SecF_bac"/>
</dbReference>
<dbReference type="NCBIfam" id="TIGR00916">
    <property type="entry name" value="2A0604s01"/>
    <property type="match status" value="1"/>
</dbReference>
<dbReference type="NCBIfam" id="TIGR00966">
    <property type="entry name" value="transloc_SecF"/>
    <property type="match status" value="1"/>
</dbReference>
<dbReference type="PANTHER" id="PTHR30081:SF8">
    <property type="entry name" value="PROTEIN TRANSLOCASE SUBUNIT SECF"/>
    <property type="match status" value="1"/>
</dbReference>
<dbReference type="PANTHER" id="PTHR30081">
    <property type="entry name" value="PROTEIN-EXPORT MEMBRANE PROTEIN SEC"/>
    <property type="match status" value="1"/>
</dbReference>
<dbReference type="Pfam" id="PF02355">
    <property type="entry name" value="SecD_SecF_C"/>
    <property type="match status" value="1"/>
</dbReference>
<dbReference type="PRINTS" id="PR01755">
    <property type="entry name" value="SECFTRNLCASE"/>
</dbReference>
<dbReference type="SUPFAM" id="SSF82866">
    <property type="entry name" value="Multidrug efflux transporter AcrB transmembrane domain"/>
    <property type="match status" value="1"/>
</dbReference>
<name>SECF_BORBU</name>
<reference key="1">
    <citation type="journal article" date="1997" name="Nature">
        <title>Genomic sequence of a Lyme disease spirochaete, Borrelia burgdorferi.</title>
        <authorList>
            <person name="Fraser C.M."/>
            <person name="Casjens S."/>
            <person name="Huang W.M."/>
            <person name="Sutton G.G."/>
            <person name="Clayton R.A."/>
            <person name="Lathigra R."/>
            <person name="White O."/>
            <person name="Ketchum K.A."/>
            <person name="Dodson R.J."/>
            <person name="Hickey E.K."/>
            <person name="Gwinn M.L."/>
            <person name="Dougherty B.A."/>
            <person name="Tomb J.-F."/>
            <person name="Fleischmann R.D."/>
            <person name="Richardson D.L."/>
            <person name="Peterson J.D."/>
            <person name="Kerlavage A.R."/>
            <person name="Quackenbush J."/>
            <person name="Salzberg S.L."/>
            <person name="Hanson M."/>
            <person name="van Vugt R."/>
            <person name="Palmer N."/>
            <person name="Adams M.D."/>
            <person name="Gocayne J.D."/>
            <person name="Weidman J.F."/>
            <person name="Utterback T.R."/>
            <person name="Watthey L."/>
            <person name="McDonald L.A."/>
            <person name="Artiach P."/>
            <person name="Bowman C."/>
            <person name="Garland S.A."/>
            <person name="Fujii C."/>
            <person name="Cotton M.D."/>
            <person name="Horst K."/>
            <person name="Roberts K.M."/>
            <person name="Hatch B."/>
            <person name="Smith H.O."/>
            <person name="Venter J.C."/>
        </authorList>
    </citation>
    <scope>NUCLEOTIDE SEQUENCE [LARGE SCALE GENOMIC DNA]</scope>
    <source>
        <strain>ATCC 35210 / DSM 4680 / CIP 102532 / B31</strain>
    </source>
</reference>
<proteinExistence type="inferred from homology"/>
<comment type="function">
    <text evidence="1">Part of the Sec protein translocase complex. Interacts with the SecYEG preprotein conducting channel. SecDF uses the proton motive force (PMF) to complete protein translocation after the ATP-dependent function of SecA.</text>
</comment>
<comment type="subunit">
    <text evidence="1">Forms a complex with SecD. Part of the essential Sec protein translocation apparatus which comprises SecA, SecYEG and auxiliary proteins SecDF. Other proteins may also be involved.</text>
</comment>
<comment type="subcellular location">
    <subcellularLocation>
        <location evidence="1">Cell inner membrane</location>
        <topology evidence="1">Multi-pass membrane protein</topology>
    </subcellularLocation>
</comment>
<comment type="similarity">
    <text evidence="1">Belongs to the SecD/SecF family. SecF subfamily.</text>
</comment>
<accession>O51597</accession>
<keyword id="KW-0997">Cell inner membrane</keyword>
<keyword id="KW-1003">Cell membrane</keyword>
<keyword id="KW-0472">Membrane</keyword>
<keyword id="KW-0653">Protein transport</keyword>
<keyword id="KW-1185">Reference proteome</keyword>
<keyword id="KW-0811">Translocation</keyword>
<keyword id="KW-0812">Transmembrane</keyword>
<keyword id="KW-1133">Transmembrane helix</keyword>
<keyword id="KW-0813">Transport</keyword>
<protein>
    <recommendedName>
        <fullName>Protein translocase subunit SecF</fullName>
    </recommendedName>
</protein>
<gene>
    <name evidence="1" type="primary">secF</name>
    <name type="ordered locus">BB_0653</name>
</gene>
<evidence type="ECO:0000255" key="1">
    <source>
        <dbReference type="HAMAP-Rule" id="MF_01464"/>
    </source>
</evidence>
<sequence length="299" mass="34057">MQRVINFSKYGSNVLIVSAVLILVGLIYTFFYHGGYNWGIDFSSRVNINLSIEKSNIKENEIKKIFSPIYKTLDVNSIFSPDQNKSEFSIMVKSDVIDYAFKTEVQKTILDKLKETFDANIEVLDSYFIDSSFSSTLRIRSIFLVLGTFILILIYITLRFKLSYAIASILSIFHDIFFIVAFLGVFRIEINSYIIVAILTIIGYSLNDTIIIFDRIRDNVKRLTDNTFLNVLNISISQTLSRTVLTSVTTFVAVFSIYVFTEGSIKDFSLVFMVGVIVGTYSSVFIASPILLNLYKKIK</sequence>